<comment type="function">
    <text evidence="1">Sequence-specific transcription factor which is part of a developmental regulatory system that provides cells with specific positional identities on the anterior-posterior axis. Also binds to its own promoter. Binds specifically to the motif 5'-CYYNATTA[TG]Y-3' (By similarity).</text>
</comment>
<comment type="subunit">
    <text evidence="2">Forms a DNA-binding heterodimer with transcription factor PBX1.</text>
</comment>
<comment type="subcellular location">
    <subcellularLocation>
        <location evidence="3">Nucleus</location>
    </subcellularLocation>
</comment>
<comment type="similarity">
    <text evidence="5">Belongs to the Antp homeobox family.</text>
</comment>
<sequence>MSSYFVNSFCGRYPNGPDYQLHNYGDHSSVSEQFRDSASMHSGRYGYGYNGMDLSVGRSGSGHFGSGERARSYAAGASAAPAEPRYSQPATSTHSPPPDPLPCSAVAPSPGSDSHHGGKNSLGNSSGASANAGSTHISSREGVGTASGAEEDAPASSEQASAQSEPSPAPPAQPQIYPWMRKLHISHDNIGGPEGKRARTAYTRYQTLELEKEFHFNRYLTRRRRIEIAHALCLSERQIKIWFQNRRMKWKKDNKLKSMSMAAAGGAFRP</sequence>
<organism>
    <name type="scientific">Bos taurus</name>
    <name type="common">Bovine</name>
    <dbReference type="NCBI Taxonomy" id="9913"/>
    <lineage>
        <taxon>Eukaryota</taxon>
        <taxon>Metazoa</taxon>
        <taxon>Chordata</taxon>
        <taxon>Craniata</taxon>
        <taxon>Vertebrata</taxon>
        <taxon>Euteleostomi</taxon>
        <taxon>Mammalia</taxon>
        <taxon>Eutheria</taxon>
        <taxon>Laurasiatheria</taxon>
        <taxon>Artiodactyla</taxon>
        <taxon>Ruminantia</taxon>
        <taxon>Pecora</taxon>
        <taxon>Bovidae</taxon>
        <taxon>Bovinae</taxon>
        <taxon>Bos</taxon>
    </lineage>
</organism>
<name>HXA5_BOVIN</name>
<reference key="1">
    <citation type="submission" date="2006-02" db="EMBL/GenBank/DDBJ databases">
        <authorList>
            <consortium name="NIH - Mammalian Gene Collection (MGC) project"/>
        </authorList>
    </citation>
    <scope>NUCLEOTIDE SEQUENCE [LARGE SCALE MRNA]</scope>
    <source>
        <strain>Hereford</strain>
        <tissue>Uterus</tissue>
    </source>
</reference>
<keyword id="KW-0217">Developmental protein</keyword>
<keyword id="KW-0238">DNA-binding</keyword>
<keyword id="KW-0371">Homeobox</keyword>
<keyword id="KW-0539">Nucleus</keyword>
<keyword id="KW-1185">Reference proteome</keyword>
<keyword id="KW-0804">Transcription</keyword>
<keyword id="KW-0805">Transcription regulation</keyword>
<gene>
    <name type="primary">HOXA5</name>
</gene>
<protein>
    <recommendedName>
        <fullName>Homeobox protein Hox-A5</fullName>
    </recommendedName>
</protein>
<proteinExistence type="evidence at transcript level"/>
<feature type="chain" id="PRO_0000246003" description="Homeobox protein Hox-A5">
    <location>
        <begin position="1"/>
        <end position="270"/>
    </location>
</feature>
<feature type="DNA-binding region" description="Homeobox" evidence="3">
    <location>
        <begin position="195"/>
        <end position="254"/>
    </location>
</feature>
<feature type="region of interest" description="Disordered" evidence="4">
    <location>
        <begin position="75"/>
        <end position="175"/>
    </location>
</feature>
<feature type="short sequence motif" description="Antp-type hexapeptide">
    <location>
        <begin position="176"/>
        <end position="181"/>
    </location>
</feature>
<feature type="compositionally biased region" description="Low complexity" evidence="4">
    <location>
        <begin position="75"/>
        <end position="86"/>
    </location>
</feature>
<feature type="compositionally biased region" description="Low complexity" evidence="4">
    <location>
        <begin position="119"/>
        <end position="134"/>
    </location>
</feature>
<feature type="compositionally biased region" description="Low complexity" evidence="4">
    <location>
        <begin position="154"/>
        <end position="166"/>
    </location>
</feature>
<dbReference type="EMBL" id="BC113284">
    <property type="protein sequence ID" value="AAI13285.1"/>
    <property type="molecule type" value="mRNA"/>
</dbReference>
<dbReference type="RefSeq" id="NP_001070566.1">
    <property type="nucleotide sequence ID" value="NM_001077098.1"/>
</dbReference>
<dbReference type="SMR" id="Q2HJ67"/>
<dbReference type="FunCoup" id="Q2HJ67">
    <property type="interactions" value="196"/>
</dbReference>
<dbReference type="STRING" id="9913.ENSBTAP00000016196"/>
<dbReference type="PaxDb" id="9913-ENSBTAP00000016196"/>
<dbReference type="GeneID" id="768039"/>
<dbReference type="KEGG" id="bta:768039"/>
<dbReference type="CTD" id="3202"/>
<dbReference type="eggNOG" id="KOG0489">
    <property type="taxonomic scope" value="Eukaryota"/>
</dbReference>
<dbReference type="HOGENOM" id="CLU_061398_2_0_1"/>
<dbReference type="InParanoid" id="Q2HJ67"/>
<dbReference type="OrthoDB" id="6159439at2759"/>
<dbReference type="TreeFam" id="TF316310"/>
<dbReference type="Proteomes" id="UP000009136">
    <property type="component" value="Unplaced"/>
</dbReference>
<dbReference type="GO" id="GO:0005634">
    <property type="term" value="C:nucleus"/>
    <property type="evidence" value="ECO:0000318"/>
    <property type="project" value="GO_Central"/>
</dbReference>
<dbReference type="GO" id="GO:0000981">
    <property type="term" value="F:DNA-binding transcription factor activity, RNA polymerase II-specific"/>
    <property type="evidence" value="ECO:0000318"/>
    <property type="project" value="GO_Central"/>
</dbReference>
<dbReference type="GO" id="GO:0000978">
    <property type="term" value="F:RNA polymerase II cis-regulatory region sequence-specific DNA binding"/>
    <property type="evidence" value="ECO:0000318"/>
    <property type="project" value="GO_Central"/>
</dbReference>
<dbReference type="GO" id="GO:0009952">
    <property type="term" value="P:anterior/posterior pattern specification"/>
    <property type="evidence" value="ECO:0000318"/>
    <property type="project" value="GO_Central"/>
</dbReference>
<dbReference type="GO" id="GO:0006357">
    <property type="term" value="P:regulation of transcription by RNA polymerase II"/>
    <property type="evidence" value="ECO:0000318"/>
    <property type="project" value="GO_Central"/>
</dbReference>
<dbReference type="CDD" id="cd00086">
    <property type="entry name" value="homeodomain"/>
    <property type="match status" value="1"/>
</dbReference>
<dbReference type="FunFam" id="1.10.10.60:FF:000055">
    <property type="entry name" value="Homeobox protein Hox-A5"/>
    <property type="match status" value="1"/>
</dbReference>
<dbReference type="Gene3D" id="1.10.10.60">
    <property type="entry name" value="Homeodomain-like"/>
    <property type="match status" value="1"/>
</dbReference>
<dbReference type="InterPro" id="IPR050296">
    <property type="entry name" value="Antp_homeobox"/>
</dbReference>
<dbReference type="InterPro" id="IPR001356">
    <property type="entry name" value="HD"/>
</dbReference>
<dbReference type="InterPro" id="IPR020479">
    <property type="entry name" value="HD_metazoa"/>
</dbReference>
<dbReference type="InterPro" id="IPR017995">
    <property type="entry name" value="Homeobox_antennapedia"/>
</dbReference>
<dbReference type="InterPro" id="IPR001827">
    <property type="entry name" value="Homeobox_Antennapedia_CS"/>
</dbReference>
<dbReference type="InterPro" id="IPR017970">
    <property type="entry name" value="Homeobox_CS"/>
</dbReference>
<dbReference type="InterPro" id="IPR009057">
    <property type="entry name" value="Homeodomain-like_sf"/>
</dbReference>
<dbReference type="PANTHER" id="PTHR45659">
    <property type="entry name" value="HOMEOBOX PROTEIN HOX"/>
    <property type="match status" value="1"/>
</dbReference>
<dbReference type="PANTHER" id="PTHR45659:SF10">
    <property type="entry name" value="HOMEOBOX PROTEIN HOX-A5"/>
    <property type="match status" value="1"/>
</dbReference>
<dbReference type="Pfam" id="PF00046">
    <property type="entry name" value="Homeodomain"/>
    <property type="match status" value="1"/>
</dbReference>
<dbReference type="PRINTS" id="PR00025">
    <property type="entry name" value="ANTENNAPEDIA"/>
</dbReference>
<dbReference type="PRINTS" id="PR00024">
    <property type="entry name" value="HOMEOBOX"/>
</dbReference>
<dbReference type="SMART" id="SM00389">
    <property type="entry name" value="HOX"/>
    <property type="match status" value="1"/>
</dbReference>
<dbReference type="SUPFAM" id="SSF46689">
    <property type="entry name" value="Homeodomain-like"/>
    <property type="match status" value="1"/>
</dbReference>
<dbReference type="PROSITE" id="PS00032">
    <property type="entry name" value="ANTENNAPEDIA"/>
    <property type="match status" value="1"/>
</dbReference>
<dbReference type="PROSITE" id="PS00027">
    <property type="entry name" value="HOMEOBOX_1"/>
    <property type="match status" value="1"/>
</dbReference>
<dbReference type="PROSITE" id="PS50071">
    <property type="entry name" value="HOMEOBOX_2"/>
    <property type="match status" value="1"/>
</dbReference>
<evidence type="ECO:0000250" key="1"/>
<evidence type="ECO:0000250" key="2">
    <source>
        <dbReference type="UniProtKB" id="P20719"/>
    </source>
</evidence>
<evidence type="ECO:0000255" key="3">
    <source>
        <dbReference type="PROSITE-ProRule" id="PRU00108"/>
    </source>
</evidence>
<evidence type="ECO:0000256" key="4">
    <source>
        <dbReference type="SAM" id="MobiDB-lite"/>
    </source>
</evidence>
<evidence type="ECO:0000305" key="5"/>
<accession>Q2HJ67</accession>